<name>PSBK_ORYSA</name>
<sequence length="61" mass="6982">MPNILSLTCICFNSVIYPTSFFFAKLPEAYAIFNPIVDFMPVIPVLFFLLAFVWQAAVSFR</sequence>
<protein>
    <recommendedName>
        <fullName evidence="1">Photosystem II reaction center protein K</fullName>
        <shortName evidence="1">PSII-K</shortName>
    </recommendedName>
</protein>
<geneLocation type="chloroplast"/>
<accession>P0C408</accession>
<accession>P12162</accession>
<accession>Q6QXW2</accession>
<accession>Q6QY88</accession>
<proteinExistence type="inferred from homology"/>
<gene>
    <name evidence="1" type="primary">psbK</name>
    <name type="ORF">PA011</name>
</gene>
<reference key="1">
    <citation type="journal article" date="2004" name="Plant Physiol.">
        <title>A comparison of rice chloroplast genomes.</title>
        <authorList>
            <person name="Tang J."/>
            <person name="Xia H."/>
            <person name="Cao M."/>
            <person name="Zhang X."/>
            <person name="Zeng W."/>
            <person name="Hu S."/>
            <person name="Tong W."/>
            <person name="Wang J."/>
            <person name="Wang J."/>
            <person name="Yu J."/>
            <person name="Yang H."/>
            <person name="Zhu L."/>
        </authorList>
    </citation>
    <scope>NUCLEOTIDE SEQUENCE [LARGE SCALE GENOMIC DNA]</scope>
    <source>
        <strain>cv. PA64s</strain>
    </source>
</reference>
<dbReference type="EMBL" id="AY522331">
    <property type="protein sequence ID" value="AAS46169.1"/>
    <property type="status" value="ALT_INIT"/>
    <property type="molecule type" value="Genomic_DNA"/>
</dbReference>
<dbReference type="RefSeq" id="YP_009305287.1">
    <property type="nucleotide sequence ID" value="NC_031333.1"/>
</dbReference>
<dbReference type="SMR" id="P0C408"/>
<dbReference type="GeneID" id="29141333"/>
<dbReference type="ExpressionAtlas" id="P0C408">
    <property type="expression patterns" value="baseline and differential"/>
</dbReference>
<dbReference type="GO" id="GO:0009535">
    <property type="term" value="C:chloroplast thylakoid membrane"/>
    <property type="evidence" value="ECO:0007669"/>
    <property type="project" value="UniProtKB-SubCell"/>
</dbReference>
<dbReference type="GO" id="GO:0009539">
    <property type="term" value="C:photosystem II reaction center"/>
    <property type="evidence" value="ECO:0007669"/>
    <property type="project" value="InterPro"/>
</dbReference>
<dbReference type="GO" id="GO:0009536">
    <property type="term" value="C:plastid"/>
    <property type="evidence" value="ECO:0000305"/>
    <property type="project" value="Gramene"/>
</dbReference>
<dbReference type="GO" id="GO:0015979">
    <property type="term" value="P:photosynthesis"/>
    <property type="evidence" value="ECO:0007669"/>
    <property type="project" value="UniProtKB-UniRule"/>
</dbReference>
<dbReference type="HAMAP" id="MF_00441">
    <property type="entry name" value="PSII_PsbK"/>
    <property type="match status" value="1"/>
</dbReference>
<dbReference type="InterPro" id="IPR003687">
    <property type="entry name" value="PSII_PsbK"/>
</dbReference>
<dbReference type="InterPro" id="IPR037270">
    <property type="entry name" value="PSII_PsbK_sf"/>
</dbReference>
<dbReference type="NCBIfam" id="NF002715">
    <property type="entry name" value="PRK02553.1"/>
    <property type="match status" value="1"/>
</dbReference>
<dbReference type="PANTHER" id="PTHR35325">
    <property type="match status" value="1"/>
</dbReference>
<dbReference type="PANTHER" id="PTHR35325:SF1">
    <property type="entry name" value="PHOTOSYSTEM II REACTION CENTER PROTEIN K"/>
    <property type="match status" value="1"/>
</dbReference>
<dbReference type="Pfam" id="PF02533">
    <property type="entry name" value="PsbK"/>
    <property type="match status" value="1"/>
</dbReference>
<dbReference type="SUPFAM" id="SSF161037">
    <property type="entry name" value="Photosystem II reaction center protein K, PsbK"/>
    <property type="match status" value="1"/>
</dbReference>
<keyword id="KW-0150">Chloroplast</keyword>
<keyword id="KW-0472">Membrane</keyword>
<keyword id="KW-0602">Photosynthesis</keyword>
<keyword id="KW-0604">Photosystem II</keyword>
<keyword id="KW-0934">Plastid</keyword>
<keyword id="KW-0674">Reaction center</keyword>
<keyword id="KW-0793">Thylakoid</keyword>
<keyword id="KW-0812">Transmembrane</keyword>
<keyword id="KW-1133">Transmembrane helix</keyword>
<evidence type="ECO:0000255" key="1">
    <source>
        <dbReference type="HAMAP-Rule" id="MF_00441"/>
    </source>
</evidence>
<evidence type="ECO:0000305" key="2"/>
<comment type="function">
    <text evidence="1">One of the components of the core complex of photosystem II (PSII). PSII is a light-driven water:plastoquinone oxidoreductase that uses light energy to abstract electrons from H(2)O, generating O(2) and a proton gradient subsequently used for ATP formation. It consists of a core antenna complex that captures photons, and an electron transfer chain that converts photonic excitation into a charge separation.</text>
</comment>
<comment type="subunit">
    <text evidence="1">PSII is composed of 1 copy each of membrane proteins PsbA, PsbB, PsbC, PsbD, PsbE, PsbF, PsbH, PsbI, PsbJ, PsbK, PsbL, PsbM, PsbT, PsbX, PsbY, PsbZ, Psb30/Ycf12, at least 3 peripheral proteins of the oxygen-evolving complex and a large number of cofactors. It forms dimeric complexes.</text>
</comment>
<comment type="subcellular location">
    <subcellularLocation>
        <location evidence="1">Plastid</location>
        <location evidence="1">Chloroplast thylakoid membrane</location>
        <topology evidence="1">Single-pass membrane protein</topology>
    </subcellularLocation>
</comment>
<comment type="similarity">
    <text evidence="1">Belongs to the PsbK family.</text>
</comment>
<comment type="sequence caution" evidence="2">
    <conflict type="erroneous initiation">
        <sequence resource="EMBL-CDS" id="AAS46169"/>
    </conflict>
    <text>Extended N-terminus.</text>
</comment>
<organism>
    <name type="scientific">Oryza sativa</name>
    <name type="common">Rice</name>
    <dbReference type="NCBI Taxonomy" id="4530"/>
    <lineage>
        <taxon>Eukaryota</taxon>
        <taxon>Viridiplantae</taxon>
        <taxon>Streptophyta</taxon>
        <taxon>Embryophyta</taxon>
        <taxon>Tracheophyta</taxon>
        <taxon>Spermatophyta</taxon>
        <taxon>Magnoliopsida</taxon>
        <taxon>Liliopsida</taxon>
        <taxon>Poales</taxon>
        <taxon>Poaceae</taxon>
        <taxon>BOP clade</taxon>
        <taxon>Oryzoideae</taxon>
        <taxon>Oryzeae</taxon>
        <taxon>Oryzinae</taxon>
        <taxon>Oryza</taxon>
    </lineage>
</organism>
<feature type="propeptide" id="PRO_0000029501" evidence="1">
    <location>
        <begin position="1"/>
        <end position="24"/>
    </location>
</feature>
<feature type="chain" id="PRO_0000029502" description="Photosystem II reaction center protein K" evidence="1">
    <location>
        <begin position="25"/>
        <end position="61"/>
    </location>
</feature>
<feature type="transmembrane region" description="Helical" evidence="1">
    <location>
        <begin position="32"/>
        <end position="52"/>
    </location>
</feature>